<gene>
    <name type="primary">galE1</name>
    <name type="ordered locus">Rv3634c</name>
</gene>
<comment type="function">
    <text evidence="1">Involved in the metabolism of galactose. Catalyzes the conversion of UDP-galactose (UDP-Gal) to UDP-glucose (UDP-Glc) through a mechanism involving the transient reduction of NAD (By similarity).</text>
</comment>
<comment type="catalytic activity">
    <reaction>
        <text>UDP-alpha-D-glucose = UDP-alpha-D-galactose</text>
        <dbReference type="Rhea" id="RHEA:22168"/>
        <dbReference type="ChEBI" id="CHEBI:58885"/>
        <dbReference type="ChEBI" id="CHEBI:66914"/>
        <dbReference type="EC" id="5.1.3.2"/>
    </reaction>
</comment>
<comment type="cofactor">
    <cofactor evidence="1">
        <name>NAD(+)</name>
        <dbReference type="ChEBI" id="CHEBI:57540"/>
    </cofactor>
</comment>
<comment type="pathway">
    <text>Carbohydrate metabolism; galactose metabolism.</text>
</comment>
<comment type="subunit">
    <text evidence="1">Homodimer.</text>
</comment>
<comment type="similarity">
    <text evidence="3">Belongs to the NAD(P)-dependent epimerase/dehydratase family.</text>
</comment>
<name>GALE_MYCTU</name>
<protein>
    <recommendedName>
        <fullName>UDP-glucose 4-epimerase</fullName>
        <ecNumber>5.1.3.2</ecNumber>
    </recommendedName>
    <alternativeName>
        <fullName>UDP-galactose 4-epimerase</fullName>
    </alternativeName>
    <alternativeName>
        <fullName>Uridine diphosphate galactose 4-epimerase</fullName>
    </alternativeName>
</protein>
<reference key="1">
    <citation type="journal article" date="1998" name="Nature">
        <title>Deciphering the biology of Mycobacterium tuberculosis from the complete genome sequence.</title>
        <authorList>
            <person name="Cole S.T."/>
            <person name="Brosch R."/>
            <person name="Parkhill J."/>
            <person name="Garnier T."/>
            <person name="Churcher C.M."/>
            <person name="Harris D.E."/>
            <person name="Gordon S.V."/>
            <person name="Eiglmeier K."/>
            <person name="Gas S."/>
            <person name="Barry C.E. III"/>
            <person name="Tekaia F."/>
            <person name="Badcock K."/>
            <person name="Basham D."/>
            <person name="Brown D."/>
            <person name="Chillingworth T."/>
            <person name="Connor R."/>
            <person name="Davies R.M."/>
            <person name="Devlin K."/>
            <person name="Feltwell T."/>
            <person name="Gentles S."/>
            <person name="Hamlin N."/>
            <person name="Holroyd S."/>
            <person name="Hornsby T."/>
            <person name="Jagels K."/>
            <person name="Krogh A."/>
            <person name="McLean J."/>
            <person name="Moule S."/>
            <person name="Murphy L.D."/>
            <person name="Oliver S."/>
            <person name="Osborne J."/>
            <person name="Quail M.A."/>
            <person name="Rajandream M.A."/>
            <person name="Rogers J."/>
            <person name="Rutter S."/>
            <person name="Seeger K."/>
            <person name="Skelton S."/>
            <person name="Squares S."/>
            <person name="Squares R."/>
            <person name="Sulston J.E."/>
            <person name="Taylor K."/>
            <person name="Whitehead S."/>
            <person name="Barrell B.G."/>
        </authorList>
    </citation>
    <scope>NUCLEOTIDE SEQUENCE [LARGE SCALE GENOMIC DNA]</scope>
    <source>
        <strain>ATCC 25618 / H37Rv</strain>
    </source>
</reference>
<reference key="2">
    <citation type="journal article" date="2011" name="Mol. Cell. Proteomics">
        <title>Proteogenomic analysis of Mycobacterium tuberculosis by high resolution mass spectrometry.</title>
        <authorList>
            <person name="Kelkar D.S."/>
            <person name="Kumar D."/>
            <person name="Kumar P."/>
            <person name="Balakrishnan L."/>
            <person name="Muthusamy B."/>
            <person name="Yadav A.K."/>
            <person name="Shrivastava P."/>
            <person name="Marimuthu A."/>
            <person name="Anand S."/>
            <person name="Sundaram H."/>
            <person name="Kingsbury R."/>
            <person name="Harsha H.C."/>
            <person name="Nair B."/>
            <person name="Prasad T.S."/>
            <person name="Chauhan D.S."/>
            <person name="Katoch K."/>
            <person name="Katoch V.M."/>
            <person name="Kumar P."/>
            <person name="Chaerkady R."/>
            <person name="Ramachandran S."/>
            <person name="Dash D."/>
            <person name="Pandey A."/>
        </authorList>
    </citation>
    <scope>IDENTIFICATION BY MASS SPECTROMETRY [LARGE SCALE ANALYSIS]</scope>
    <source>
        <strain>ATCC 25618 / H37Rv</strain>
    </source>
</reference>
<proteinExistence type="evidence at protein level"/>
<evidence type="ECO:0000250" key="1"/>
<evidence type="ECO:0000255" key="2">
    <source>
        <dbReference type="PROSITE-ProRule" id="PRU10001"/>
    </source>
</evidence>
<evidence type="ECO:0000305" key="3"/>
<evidence type="ECO:0007829" key="4">
    <source>
        <dbReference type="PDB" id="7YS8"/>
    </source>
</evidence>
<keyword id="KW-0002">3D-structure</keyword>
<keyword id="KW-0119">Carbohydrate metabolism</keyword>
<keyword id="KW-0299">Galactose metabolism</keyword>
<keyword id="KW-0413">Isomerase</keyword>
<keyword id="KW-0520">NAD</keyword>
<keyword id="KW-1185">Reference proteome</keyword>
<accession>P9WN67</accession>
<accession>F2GF05</accession>
<accession>L0TES1</accession>
<accession>Q6MWV3</accession>
<accession>Q7D561</accession>
<feature type="chain" id="PRO_0000420762" description="UDP-glucose 4-epimerase">
    <location>
        <begin position="1"/>
        <end position="314"/>
    </location>
</feature>
<feature type="active site" description="Proton acceptor" evidence="2">
    <location>
        <position position="146"/>
    </location>
</feature>
<feature type="binding site" evidence="1">
    <location>
        <begin position="11"/>
        <end position="12"/>
    </location>
    <ligand>
        <name>NAD(+)</name>
        <dbReference type="ChEBI" id="CHEBI:57540"/>
    </ligand>
</feature>
<feature type="binding site" evidence="1">
    <location>
        <begin position="31"/>
        <end position="36"/>
    </location>
    <ligand>
        <name>NAD(+)</name>
        <dbReference type="ChEBI" id="CHEBI:57540"/>
    </ligand>
</feature>
<feature type="binding site" evidence="1">
    <location>
        <begin position="56"/>
        <end position="57"/>
    </location>
    <ligand>
        <name>NAD(+)</name>
        <dbReference type="ChEBI" id="CHEBI:57540"/>
    </ligand>
</feature>
<feature type="binding site" evidence="1">
    <location>
        <begin position="77"/>
        <end position="81"/>
    </location>
    <ligand>
        <name>NAD(+)</name>
        <dbReference type="ChEBI" id="CHEBI:57540"/>
    </ligand>
</feature>
<feature type="binding site" evidence="1">
    <location>
        <position position="121"/>
    </location>
    <ligand>
        <name>substrate</name>
    </ligand>
</feature>
<feature type="binding site" evidence="1">
    <location>
        <position position="146"/>
    </location>
    <ligand>
        <name>NAD(+)</name>
        <dbReference type="ChEBI" id="CHEBI:57540"/>
    </ligand>
</feature>
<feature type="binding site" evidence="1">
    <location>
        <position position="146"/>
    </location>
    <ligand>
        <name>substrate</name>
    </ligand>
</feature>
<feature type="binding site" evidence="1">
    <location>
        <position position="150"/>
    </location>
    <ligand>
        <name>NAD(+)</name>
        <dbReference type="ChEBI" id="CHEBI:57540"/>
    </ligand>
</feature>
<feature type="binding site" evidence="1">
    <location>
        <position position="175"/>
    </location>
    <ligand>
        <name>substrate</name>
    </ligand>
</feature>
<feature type="binding site" evidence="1">
    <location>
        <begin position="189"/>
        <end position="190"/>
    </location>
    <ligand>
        <name>substrate</name>
    </ligand>
</feature>
<feature type="binding site" evidence="1">
    <location>
        <begin position="204"/>
        <end position="206"/>
    </location>
    <ligand>
        <name>substrate</name>
    </ligand>
</feature>
<feature type="binding site" evidence="1">
    <location>
        <position position="213"/>
    </location>
    <ligand>
        <name>substrate</name>
    </ligand>
</feature>
<feature type="binding site" evidence="1">
    <location>
        <begin position="271"/>
        <end position="274"/>
    </location>
    <ligand>
        <name>substrate</name>
    </ligand>
</feature>
<feature type="strand" evidence="4">
    <location>
        <begin position="2"/>
        <end position="6"/>
    </location>
</feature>
<feature type="turn" evidence="4">
    <location>
        <begin position="7"/>
        <end position="9"/>
    </location>
</feature>
<feature type="helix" evidence="4">
    <location>
        <begin position="11"/>
        <end position="22"/>
    </location>
</feature>
<feature type="strand" evidence="4">
    <location>
        <begin position="26"/>
        <end position="31"/>
    </location>
</feature>
<feature type="helix" evidence="4">
    <location>
        <begin position="38"/>
        <end position="40"/>
    </location>
</feature>
<feature type="helix" evidence="4">
    <location>
        <begin position="42"/>
        <end position="44"/>
    </location>
</feature>
<feature type="strand" evidence="4">
    <location>
        <begin position="50"/>
        <end position="54"/>
    </location>
</feature>
<feature type="turn" evidence="4">
    <location>
        <begin position="57"/>
        <end position="59"/>
    </location>
</feature>
<feature type="helix" evidence="4">
    <location>
        <begin position="62"/>
        <end position="69"/>
    </location>
</feature>
<feature type="strand" evidence="4">
    <location>
        <begin position="72"/>
        <end position="76"/>
    </location>
</feature>
<feature type="helix" evidence="4">
    <location>
        <begin position="83"/>
        <end position="88"/>
    </location>
</feature>
<feature type="helix" evidence="4">
    <location>
        <begin position="90"/>
        <end position="97"/>
    </location>
</feature>
<feature type="helix" evidence="4">
    <location>
        <begin position="99"/>
        <end position="108"/>
    </location>
</feature>
<feature type="turn" evidence="4">
    <location>
        <begin position="109"/>
        <end position="112"/>
    </location>
</feature>
<feature type="strand" evidence="4">
    <location>
        <begin position="115"/>
        <end position="119"/>
    </location>
</feature>
<feature type="turn" evidence="4">
    <location>
        <begin position="122"/>
        <end position="126"/>
    </location>
</feature>
<feature type="strand" evidence="4">
    <location>
        <begin position="130"/>
        <end position="134"/>
    </location>
</feature>
<feature type="helix" evidence="4">
    <location>
        <begin position="145"/>
        <end position="164"/>
    </location>
</feature>
<feature type="strand" evidence="4">
    <location>
        <begin position="167"/>
        <end position="178"/>
    </location>
</feature>
<feature type="strand" evidence="4">
    <location>
        <begin position="185"/>
        <end position="187"/>
    </location>
</feature>
<feature type="helix" evidence="4">
    <location>
        <begin position="189"/>
        <end position="198"/>
    </location>
</feature>
<feature type="strand" evidence="4">
    <location>
        <begin position="204"/>
        <end position="209"/>
    </location>
</feature>
<feature type="strand" evidence="4">
    <location>
        <begin position="215"/>
        <end position="217"/>
    </location>
</feature>
<feature type="helix" evidence="4">
    <location>
        <begin position="218"/>
        <end position="228"/>
    </location>
</feature>
<feature type="strand" evidence="4">
    <location>
        <begin position="237"/>
        <end position="241"/>
    </location>
</feature>
<feature type="helix" evidence="4">
    <location>
        <begin position="248"/>
        <end position="259"/>
    </location>
</feature>
<feature type="strand" evidence="4">
    <location>
        <begin position="266"/>
        <end position="268"/>
    </location>
</feature>
<feature type="helix" evidence="4">
    <location>
        <begin position="283"/>
        <end position="289"/>
    </location>
</feature>
<feature type="helix" evidence="4">
    <location>
        <begin position="297"/>
        <end position="310"/>
    </location>
</feature>
<sequence length="314" mass="33582">MRALVTGAAGFIGSTLVDRLLADGHSVVGLDNFATGRATNLEHLADNSAHVFVEADIVTADLHAILEQHRPEVVFHLAAQIDVRRSVADPQFDAAVNVIGTVRLAEAARQTGVRKIVHTSSGGSIYGTPPEYPTPETAPTDPASPYAAGKVAGEIYLNTFRHLYGLDCSHIAPANVYGPRQDPHGEAGVVAIFAQALLSGKPTRVFGDGTNTRDYVFVDDVVDAFVRVSADVGGGLRFNIGTGKETSDRQLHSAVAAAVGGPDDPEFHPPRLGDLKRSCLDIGLAERVLGWRPQIELADGVRRTVEYFRHKHTD</sequence>
<organism>
    <name type="scientific">Mycobacterium tuberculosis (strain ATCC 25618 / H37Rv)</name>
    <dbReference type="NCBI Taxonomy" id="83332"/>
    <lineage>
        <taxon>Bacteria</taxon>
        <taxon>Bacillati</taxon>
        <taxon>Actinomycetota</taxon>
        <taxon>Actinomycetes</taxon>
        <taxon>Mycobacteriales</taxon>
        <taxon>Mycobacteriaceae</taxon>
        <taxon>Mycobacterium</taxon>
        <taxon>Mycobacterium tuberculosis complex</taxon>
    </lineage>
</organism>
<dbReference type="EC" id="5.1.3.2"/>
<dbReference type="EMBL" id="AL123456">
    <property type="protein sequence ID" value="CCP46457.1"/>
    <property type="molecule type" value="Genomic_DNA"/>
</dbReference>
<dbReference type="PIR" id="C70562">
    <property type="entry name" value="C70562"/>
</dbReference>
<dbReference type="RefSeq" id="NP_215015.2">
    <property type="nucleotide sequence ID" value="NC_000962.3"/>
</dbReference>
<dbReference type="RefSeq" id="WP_003419610.1">
    <property type="nucleotide sequence ID" value="NZ_NVQJ01000045.1"/>
</dbReference>
<dbReference type="PDB" id="7YS8">
    <property type="method" value="X-ray"/>
    <property type="resolution" value="2.02 A"/>
    <property type="chains" value="A/B=1-314"/>
</dbReference>
<dbReference type="PDB" id="7YS9">
    <property type="method" value="X-ray"/>
    <property type="resolution" value="1.65 A"/>
    <property type="chains" value="A/B=1-314"/>
</dbReference>
<dbReference type="PDB" id="7YSA">
    <property type="method" value="X-ray"/>
    <property type="resolution" value="1.95 A"/>
    <property type="chains" value="A/B=1-314"/>
</dbReference>
<dbReference type="PDB" id="7YSM">
    <property type="method" value="X-ray"/>
    <property type="resolution" value="1.87 A"/>
    <property type="chains" value="A/B=1-314"/>
</dbReference>
<dbReference type="PDB" id="7YST">
    <property type="method" value="X-ray"/>
    <property type="resolution" value="1.88 A"/>
    <property type="chains" value="A/B=1-314"/>
</dbReference>
<dbReference type="PDB" id="7YSY">
    <property type="method" value="X-ray"/>
    <property type="resolution" value="2.16 A"/>
    <property type="chains" value="A/B=1-314"/>
</dbReference>
<dbReference type="PDB" id="7YT0">
    <property type="method" value="X-ray"/>
    <property type="resolution" value="1.76 A"/>
    <property type="chains" value="A/B=1-314"/>
</dbReference>
<dbReference type="PDBsum" id="7YS8"/>
<dbReference type="PDBsum" id="7YS9"/>
<dbReference type="PDBsum" id="7YSA"/>
<dbReference type="PDBsum" id="7YSM"/>
<dbReference type="PDBsum" id="7YST"/>
<dbReference type="PDBsum" id="7YSY"/>
<dbReference type="PDBsum" id="7YT0"/>
<dbReference type="SMR" id="P9WN67"/>
<dbReference type="FunCoup" id="P9WN67">
    <property type="interactions" value="234"/>
</dbReference>
<dbReference type="STRING" id="83332.Rv3634c"/>
<dbReference type="PaxDb" id="83332-Rv3634c"/>
<dbReference type="DNASU" id="885765"/>
<dbReference type="GeneID" id="885765"/>
<dbReference type="KEGG" id="mtu:Rv3634c"/>
<dbReference type="KEGG" id="mtv:RVBD_3634c"/>
<dbReference type="TubercuList" id="Rv3634c"/>
<dbReference type="eggNOG" id="COG0451">
    <property type="taxonomic scope" value="Bacteria"/>
</dbReference>
<dbReference type="InParanoid" id="P9WN67"/>
<dbReference type="OrthoDB" id="9801785at2"/>
<dbReference type="PhylomeDB" id="P9WN67"/>
<dbReference type="BioCyc" id="MetaCyc:G185E-7913-MONOMER"/>
<dbReference type="BRENDA" id="5.1.3.2">
    <property type="organism ID" value="3445"/>
</dbReference>
<dbReference type="UniPathway" id="UPA00214"/>
<dbReference type="PRO" id="PR:P9WN67"/>
<dbReference type="Proteomes" id="UP000001584">
    <property type="component" value="Chromosome"/>
</dbReference>
<dbReference type="GO" id="GO:0005886">
    <property type="term" value="C:plasma membrane"/>
    <property type="evidence" value="ECO:0007005"/>
    <property type="project" value="MTBBASE"/>
</dbReference>
<dbReference type="GO" id="GO:0003978">
    <property type="term" value="F:UDP-glucose 4-epimerase activity"/>
    <property type="evidence" value="ECO:0007669"/>
    <property type="project" value="UniProtKB-EC"/>
</dbReference>
<dbReference type="GO" id="GO:0006012">
    <property type="term" value="P:galactose metabolic process"/>
    <property type="evidence" value="ECO:0007669"/>
    <property type="project" value="UniProtKB-UniPathway"/>
</dbReference>
<dbReference type="Gene3D" id="3.40.50.720">
    <property type="entry name" value="NAD(P)-binding Rossmann-like Domain"/>
    <property type="match status" value="1"/>
</dbReference>
<dbReference type="Gene3D" id="3.90.25.10">
    <property type="entry name" value="UDP-galactose 4-epimerase, domain 1"/>
    <property type="match status" value="1"/>
</dbReference>
<dbReference type="InterPro" id="IPR001509">
    <property type="entry name" value="Epimerase_deHydtase"/>
</dbReference>
<dbReference type="InterPro" id="IPR036291">
    <property type="entry name" value="NAD(P)-bd_dom_sf"/>
</dbReference>
<dbReference type="PANTHER" id="PTHR43000">
    <property type="entry name" value="DTDP-D-GLUCOSE 4,6-DEHYDRATASE-RELATED"/>
    <property type="match status" value="1"/>
</dbReference>
<dbReference type="Pfam" id="PF01370">
    <property type="entry name" value="Epimerase"/>
    <property type="match status" value="1"/>
</dbReference>
<dbReference type="SUPFAM" id="SSF51735">
    <property type="entry name" value="NAD(P)-binding Rossmann-fold domains"/>
    <property type="match status" value="1"/>
</dbReference>
<dbReference type="PROSITE" id="PS00061">
    <property type="entry name" value="ADH_SHORT"/>
    <property type="match status" value="1"/>
</dbReference>